<organism>
    <name type="scientific">Arabidopsis thaliana</name>
    <name type="common">Mouse-ear cress</name>
    <dbReference type="NCBI Taxonomy" id="3702"/>
    <lineage>
        <taxon>Eukaryota</taxon>
        <taxon>Viridiplantae</taxon>
        <taxon>Streptophyta</taxon>
        <taxon>Embryophyta</taxon>
        <taxon>Tracheophyta</taxon>
        <taxon>Spermatophyta</taxon>
        <taxon>Magnoliopsida</taxon>
        <taxon>eudicotyledons</taxon>
        <taxon>Gunneridae</taxon>
        <taxon>Pentapetalae</taxon>
        <taxon>rosids</taxon>
        <taxon>malvids</taxon>
        <taxon>Brassicales</taxon>
        <taxon>Brassicaceae</taxon>
        <taxon>Camelineae</taxon>
        <taxon>Arabidopsis</taxon>
    </lineage>
</organism>
<feature type="transit peptide" description="Mitochondrion" evidence="2">
    <location>
        <begin position="1"/>
        <end position="30"/>
    </location>
</feature>
<feature type="chain" id="PRO_0000442051" description="Oxaloacetate tautomerase FAHD2, mitochondrial">
    <location>
        <begin position="31"/>
        <end position="224"/>
    </location>
</feature>
<feature type="binding site" evidence="1">
    <location>
        <position position="67"/>
    </location>
    <ligand>
        <name>Mg(2+)</name>
        <dbReference type="ChEBI" id="CHEBI:18420"/>
    </ligand>
</feature>
<feature type="binding site" evidence="1">
    <location>
        <position position="69"/>
    </location>
    <ligand>
        <name>Mg(2+)</name>
        <dbReference type="ChEBI" id="CHEBI:18420"/>
    </ligand>
</feature>
<feature type="binding site" evidence="1">
    <location>
        <position position="98"/>
    </location>
    <ligand>
        <name>Mg(2+)</name>
        <dbReference type="ChEBI" id="CHEBI:18420"/>
    </ligand>
</feature>
<sequence length="224" mass="24417">MATSMIQRLFKQGTKIVGVGLNYASHAKELGNALPKDPIVFLKPTSSYLENGGTIEIPHPLDSLHHEVELAVVIGQKARDVPERLAMNYIGGYALALDMTARELQVSAMASGLPCTLAKGQDTFTPISSVLPKAMVLDPNNLELWLKVDDETRQKGWTKDMIFKVPYLISYISSVMTLFKGDVILTGTPEGIGPVKIGQKITAGITGLSEVQFDVGRRLKPLLR</sequence>
<dbReference type="EC" id="5.3.2.2" evidence="4"/>
<dbReference type="EMBL" id="AB022217">
    <property type="protein sequence ID" value="BAB02762.1"/>
    <property type="molecule type" value="Genomic_DNA"/>
</dbReference>
<dbReference type="EMBL" id="CP002686">
    <property type="protein sequence ID" value="AEE75853.1"/>
    <property type="molecule type" value="Genomic_DNA"/>
</dbReference>
<dbReference type="EMBL" id="AY087490">
    <property type="protein sequence ID" value="AAM65033.1"/>
    <property type="molecule type" value="mRNA"/>
</dbReference>
<dbReference type="RefSeq" id="NP_188292.1">
    <molecule id="Q9LUR3-1"/>
    <property type="nucleotide sequence ID" value="NM_112543.3"/>
</dbReference>
<dbReference type="SMR" id="Q9LUR3"/>
<dbReference type="FunCoup" id="Q9LUR3">
    <property type="interactions" value="2477"/>
</dbReference>
<dbReference type="STRING" id="3702.Q9LUR3"/>
<dbReference type="PaxDb" id="3702-AT3G16700.1"/>
<dbReference type="ProteomicsDB" id="222345">
    <molecule id="Q9LUR3-1"/>
</dbReference>
<dbReference type="EnsemblPlants" id="AT3G16700.1">
    <molecule id="Q9LUR3-1"/>
    <property type="protein sequence ID" value="AT3G16700.1"/>
    <property type="gene ID" value="AT3G16700"/>
</dbReference>
<dbReference type="GeneID" id="820922"/>
<dbReference type="Gramene" id="AT3G16700.1">
    <molecule id="Q9LUR3-1"/>
    <property type="protein sequence ID" value="AT3G16700.1"/>
    <property type="gene ID" value="AT3G16700"/>
</dbReference>
<dbReference type="KEGG" id="ath:AT3G16700"/>
<dbReference type="Araport" id="AT3G16700"/>
<dbReference type="TAIR" id="AT3G16700"/>
<dbReference type="eggNOG" id="KOG1535">
    <property type="taxonomic scope" value="Eukaryota"/>
</dbReference>
<dbReference type="HOGENOM" id="CLU_028458_5_0_1"/>
<dbReference type="InParanoid" id="Q9LUR3"/>
<dbReference type="OMA" id="TKNYHYE"/>
<dbReference type="OrthoDB" id="411064at2759"/>
<dbReference type="PhylomeDB" id="Q9LUR3"/>
<dbReference type="BioCyc" id="ARA:AT3G16700-MONOMER"/>
<dbReference type="PRO" id="PR:Q9LUR3"/>
<dbReference type="Proteomes" id="UP000006548">
    <property type="component" value="Chromosome 3"/>
</dbReference>
<dbReference type="ExpressionAtlas" id="Q9LUR3">
    <property type="expression patterns" value="baseline and differential"/>
</dbReference>
<dbReference type="GO" id="GO:0005829">
    <property type="term" value="C:cytosol"/>
    <property type="evidence" value="ECO:0007005"/>
    <property type="project" value="TAIR"/>
</dbReference>
<dbReference type="GO" id="GO:0005739">
    <property type="term" value="C:mitochondrion"/>
    <property type="evidence" value="ECO:0000314"/>
    <property type="project" value="UniProtKB"/>
</dbReference>
<dbReference type="GO" id="GO:0047621">
    <property type="term" value="F:acylpyruvate hydrolase activity"/>
    <property type="evidence" value="ECO:0007669"/>
    <property type="project" value="UniProtKB-EC"/>
</dbReference>
<dbReference type="GO" id="GO:0005507">
    <property type="term" value="F:copper ion binding"/>
    <property type="evidence" value="ECO:0007005"/>
    <property type="project" value="TAIR"/>
</dbReference>
<dbReference type="GO" id="GO:0050163">
    <property type="term" value="F:oxaloacetate tautomerase activity"/>
    <property type="evidence" value="ECO:0000314"/>
    <property type="project" value="UniProtKB"/>
</dbReference>
<dbReference type="GO" id="GO:0006107">
    <property type="term" value="P:oxaloacetate metabolic process"/>
    <property type="evidence" value="ECO:0000314"/>
    <property type="project" value="UniProtKB"/>
</dbReference>
<dbReference type="FunFam" id="3.90.850.10:FF:000003">
    <property type="entry name" value="Fumarylacetoacetate hydrolase domain-containing 1"/>
    <property type="match status" value="1"/>
</dbReference>
<dbReference type="Gene3D" id="3.90.850.10">
    <property type="entry name" value="Fumarylacetoacetase-like, C-terminal domain"/>
    <property type="match status" value="1"/>
</dbReference>
<dbReference type="InterPro" id="IPR011234">
    <property type="entry name" value="Fumarylacetoacetase-like_C"/>
</dbReference>
<dbReference type="InterPro" id="IPR036663">
    <property type="entry name" value="Fumarylacetoacetase_C_sf"/>
</dbReference>
<dbReference type="PANTHER" id="PTHR11820">
    <property type="entry name" value="ACYLPYRUVASE"/>
    <property type="match status" value="1"/>
</dbReference>
<dbReference type="PANTHER" id="PTHR11820:SF108">
    <property type="entry name" value="ACYLPYRUVASE FAHD2, MITOCHONDRIAL-RELATED"/>
    <property type="match status" value="1"/>
</dbReference>
<dbReference type="Pfam" id="PF01557">
    <property type="entry name" value="FAA_hydrolase"/>
    <property type="match status" value="1"/>
</dbReference>
<dbReference type="SUPFAM" id="SSF56529">
    <property type="entry name" value="FAH"/>
    <property type="match status" value="1"/>
</dbReference>
<proteinExistence type="evidence at protein level"/>
<evidence type="ECO:0000250" key="1">
    <source>
        <dbReference type="UniProtKB" id="Q6P587"/>
    </source>
</evidence>
<evidence type="ECO:0000255" key="2"/>
<evidence type="ECO:0000269" key="3">
    <source>
    </source>
</evidence>
<evidence type="ECO:0000269" key="4">
    <source>
    </source>
</evidence>
<evidence type="ECO:0000303" key="5">
    <source>
    </source>
</evidence>
<evidence type="ECO:0000305" key="6"/>
<evidence type="ECO:0000312" key="7">
    <source>
        <dbReference type="Araport" id="AT3G16700"/>
    </source>
</evidence>
<evidence type="ECO:0000312" key="8">
    <source>
        <dbReference type="EMBL" id="BAB02762.1"/>
    </source>
</evidence>
<accession>Q9LUR3</accession>
<name>FAHD2_ARATH</name>
<keyword id="KW-0025">Alternative splicing</keyword>
<keyword id="KW-0413">Isomerase</keyword>
<keyword id="KW-0460">Magnesium</keyword>
<keyword id="KW-0479">Metal-binding</keyword>
<keyword id="KW-0496">Mitochondrion</keyword>
<keyword id="KW-1185">Reference proteome</keyword>
<keyword id="KW-0809">Transit peptide</keyword>
<reference key="1">
    <citation type="journal article" date="2000" name="DNA Res.">
        <title>Structural analysis of Arabidopsis thaliana chromosome 3. I. Sequence features of the regions of 4,504,864 bp covered by sixty P1 and TAC clones.</title>
        <authorList>
            <person name="Sato S."/>
            <person name="Nakamura Y."/>
            <person name="Kaneko T."/>
            <person name="Katoh T."/>
            <person name="Asamizu E."/>
            <person name="Tabata S."/>
        </authorList>
    </citation>
    <scope>NUCLEOTIDE SEQUENCE [LARGE SCALE GENOMIC DNA]</scope>
    <source>
        <strain>cv. Columbia</strain>
    </source>
</reference>
<reference key="2">
    <citation type="journal article" date="2017" name="Plant J.">
        <title>Araport11: a complete reannotation of the Arabidopsis thaliana reference genome.</title>
        <authorList>
            <person name="Cheng C.Y."/>
            <person name="Krishnakumar V."/>
            <person name="Chan A.P."/>
            <person name="Thibaud-Nissen F."/>
            <person name="Schobel S."/>
            <person name="Town C.D."/>
        </authorList>
    </citation>
    <scope>GENOME REANNOTATION</scope>
    <source>
        <strain>cv. Columbia</strain>
    </source>
</reference>
<reference key="3">
    <citation type="submission" date="2002-03" db="EMBL/GenBank/DDBJ databases">
        <title>Full-length cDNA from Arabidopsis thaliana.</title>
        <authorList>
            <person name="Brover V.V."/>
            <person name="Troukhan M.E."/>
            <person name="Alexandrov N.A."/>
            <person name="Lu Y.-P."/>
            <person name="Flavell R.B."/>
            <person name="Feldmann K.A."/>
        </authorList>
    </citation>
    <scope>NUCLEOTIDE SEQUENCE [LARGE SCALE MRNA]</scope>
</reference>
<reference key="4">
    <citation type="journal article" date="2010" name="Plant Physiol.">
        <title>Divalent metal ions in plant mitochondria and their role in interactions with proteins and oxidative stress-induced damage to respiratory function.</title>
        <authorList>
            <person name="Tan Y.-F."/>
            <person name="O'Toole N."/>
            <person name="Taylor N.L."/>
            <person name="Millar A.H."/>
        </authorList>
    </citation>
    <scope>IDENTIFICATION BY MASS SPECTROMETRY</scope>
    <scope>SUBCELLULAR LOCATION</scope>
</reference>
<reference key="5">
    <citation type="journal article" date="2024" name="Nat. Commun.">
        <title>A universal metabolite repair enzyme removes a strong inhibitor of the TCA cycle.</title>
        <authorList>
            <person name="Zmuda A.J."/>
            <person name="Kang X."/>
            <person name="Wissbroecker K.B."/>
            <person name="Freund Saxhaug K."/>
            <person name="Costa K.C."/>
            <person name="Hegeman A.D."/>
            <person name="Niehaus T.D."/>
        </authorList>
    </citation>
    <scope>FUNCTION</scope>
    <scope>CATALYTIC ACTIVITY</scope>
    <scope>BIOPHYSICOCHEMICAL PROPERTIES</scope>
</reference>
<comment type="function">
    <text evidence="4">Tautomerase that converts enol-oxaloacetate, a strong inhibitor of succinate dehydrogenase, to the physiological keto form of oxaloacetate.</text>
</comment>
<comment type="catalytic activity">
    <reaction evidence="4">
        <text>oxaloacetate = enol-oxaloacetate</text>
        <dbReference type="Rhea" id="RHEA:16021"/>
        <dbReference type="ChEBI" id="CHEBI:16452"/>
        <dbReference type="ChEBI" id="CHEBI:17479"/>
        <dbReference type="EC" id="5.3.2.2"/>
    </reaction>
    <physiologicalReaction direction="right-to-left" evidence="4">
        <dbReference type="Rhea" id="RHEA:16023"/>
    </physiologicalReaction>
</comment>
<comment type="cofactor">
    <cofactor evidence="1">
        <name>Mg(2+)</name>
        <dbReference type="ChEBI" id="CHEBI:18420"/>
    </cofactor>
    <cofactor evidence="1">
        <name>Mn(2+)</name>
        <dbReference type="ChEBI" id="CHEBI:29035"/>
    </cofactor>
    <text evidence="1 3">Requires a divalent metal cation for activity (By similarity). Binds copper in vitro (PubMed:20018591).</text>
</comment>
<comment type="biophysicochemical properties">
    <kinetics>
        <KM evidence="4">66 uM for enol-oxaloacetate</KM>
        <Vmax evidence="4">1.7 umol/min/mg enzyme</Vmax>
        <text evidence="4">kcat is 0.7 sec(-1) with enol-oxaloacetate as substrate.</text>
    </kinetics>
</comment>
<comment type="subcellular location">
    <subcellularLocation>
        <location evidence="3">Mitochondrion</location>
    </subcellularLocation>
</comment>
<comment type="alternative products">
    <event type="alternative splicing"/>
    <isoform>
        <id>Q9LUR3-1</id>
        <name>1</name>
        <sequence type="displayed"/>
    </isoform>
    <text evidence="6">A number of EST are produced. According to EST sequences.</text>
</comment>
<comment type="similarity">
    <text evidence="6">Belongs to the FAH family.</text>
</comment>
<protein>
    <recommendedName>
        <fullName evidence="6">Oxaloacetate tautomerase FAHD2, mitochondrial</fullName>
        <ecNumber evidence="4">5.3.2.2</ecNumber>
    </recommendedName>
    <alternativeName>
        <fullName evidence="6">Fumarylacetoacetate hydrolase domain-containing protein 2</fullName>
        <shortName evidence="6">FAH domain-containing protein 2</shortName>
    </alternativeName>
</protein>
<gene>
    <name evidence="5" type="primary">FAHD2</name>
    <name evidence="7" type="ordered locus">At3g16700</name>
    <name evidence="8" type="ORF">MGL6.17</name>
</gene>